<dbReference type="EC" id="1.14.14.9"/>
<dbReference type="EMBL" id="AF027868">
    <property type="protein sequence ID" value="AAB84421.1"/>
    <property type="status" value="ALT_INIT"/>
    <property type="molecule type" value="Genomic_DNA"/>
</dbReference>
<dbReference type="EMBL" id="AL009126">
    <property type="protein sequence ID" value="CAB13754.2"/>
    <property type="molecule type" value="Genomic_DNA"/>
</dbReference>
<dbReference type="PIR" id="C69896">
    <property type="entry name" value="C69896"/>
</dbReference>
<dbReference type="RefSeq" id="NP_389743.2">
    <property type="nucleotide sequence ID" value="NC_000964.3"/>
</dbReference>
<dbReference type="SMR" id="C0SPC0"/>
<dbReference type="FunCoup" id="C0SPC0">
    <property type="interactions" value="18"/>
</dbReference>
<dbReference type="STRING" id="224308.BSU18620"/>
<dbReference type="PaxDb" id="224308-BSU18620"/>
<dbReference type="EnsemblBacteria" id="CAB13754">
    <property type="protein sequence ID" value="CAB13754"/>
    <property type="gene ID" value="BSU_18620"/>
</dbReference>
<dbReference type="GeneID" id="940107"/>
<dbReference type="KEGG" id="bsu:BSU18620"/>
<dbReference type="PATRIC" id="fig|224308.179.peg.2030"/>
<dbReference type="eggNOG" id="COG2368">
    <property type="taxonomic scope" value="Bacteria"/>
</dbReference>
<dbReference type="InParanoid" id="C0SPC0"/>
<dbReference type="OrthoDB" id="9785230at2"/>
<dbReference type="PhylomeDB" id="C0SPC0"/>
<dbReference type="BioCyc" id="BSUB:BSU18620-MONOMER"/>
<dbReference type="UniPathway" id="UPA00208">
    <property type="reaction ID" value="UER00416"/>
</dbReference>
<dbReference type="Proteomes" id="UP000001570">
    <property type="component" value="Chromosome"/>
</dbReference>
<dbReference type="GO" id="GO:0052881">
    <property type="term" value="F:4-hydroxyphenylacetate 3-monooxygenase activity"/>
    <property type="evidence" value="ECO:0007669"/>
    <property type="project" value="UniProtKB-EC"/>
</dbReference>
<dbReference type="GO" id="GO:0050660">
    <property type="term" value="F:flavin adenine dinucleotide binding"/>
    <property type="evidence" value="ECO:0007669"/>
    <property type="project" value="InterPro"/>
</dbReference>
<dbReference type="GO" id="GO:0016627">
    <property type="term" value="F:oxidoreductase activity, acting on the CH-CH group of donors"/>
    <property type="evidence" value="ECO:0007669"/>
    <property type="project" value="InterPro"/>
</dbReference>
<dbReference type="GO" id="GO:0010124">
    <property type="term" value="P:phenylacetate catabolic process"/>
    <property type="evidence" value="ECO:0007669"/>
    <property type="project" value="InterPro"/>
</dbReference>
<dbReference type="Gene3D" id="1.10.3140.10">
    <property type="entry name" value="4-hydroxybutyryl-coa dehydratase, domain 1"/>
    <property type="match status" value="1"/>
</dbReference>
<dbReference type="Gene3D" id="2.40.110.10">
    <property type="entry name" value="Butyryl-CoA Dehydrogenase, subunit A, domain 2"/>
    <property type="match status" value="1"/>
</dbReference>
<dbReference type="Gene3D" id="1.20.140.10">
    <property type="entry name" value="Butyryl-CoA Dehydrogenase, subunit A, domain 3"/>
    <property type="match status" value="1"/>
</dbReference>
<dbReference type="InterPro" id="IPR046373">
    <property type="entry name" value="Acyl-CoA_Oxase/DH_mid-dom_sf"/>
</dbReference>
<dbReference type="InterPro" id="IPR036250">
    <property type="entry name" value="AcylCo_DH-like_C"/>
</dbReference>
<dbReference type="InterPro" id="IPR009100">
    <property type="entry name" value="AcylCoA_DH/oxidase_NM_dom_sf"/>
</dbReference>
<dbReference type="InterPro" id="IPR004925">
    <property type="entry name" value="HpaB/PvcC/4-BUDH"/>
</dbReference>
<dbReference type="InterPro" id="IPR024719">
    <property type="entry name" value="HpaB/PvcC/4-BUDH_C"/>
</dbReference>
<dbReference type="InterPro" id="IPR024674">
    <property type="entry name" value="HpaB/PvcC/4-BUDH_N"/>
</dbReference>
<dbReference type="InterPro" id="IPR012687">
    <property type="entry name" value="HpaB_Deino-type"/>
</dbReference>
<dbReference type="NCBIfam" id="TIGR02309">
    <property type="entry name" value="HpaB-1"/>
    <property type="match status" value="1"/>
</dbReference>
<dbReference type="PANTHER" id="PTHR36117">
    <property type="entry name" value="4-HYDROXYPHENYLACETATE 3-MONOOXYGENASE-RELATED"/>
    <property type="match status" value="1"/>
</dbReference>
<dbReference type="PANTHER" id="PTHR36117:SF3">
    <property type="entry name" value="4-HYDROXYPHENYLACETATE 3-MONOOXYGENASE-RELATED"/>
    <property type="match status" value="1"/>
</dbReference>
<dbReference type="Pfam" id="PF03241">
    <property type="entry name" value="HpaB"/>
    <property type="match status" value="1"/>
</dbReference>
<dbReference type="Pfam" id="PF11794">
    <property type="entry name" value="HpaB_N"/>
    <property type="match status" value="1"/>
</dbReference>
<dbReference type="PIRSF" id="PIRSF000331">
    <property type="entry name" value="HpaA_HpaB"/>
    <property type="match status" value="1"/>
</dbReference>
<dbReference type="SUPFAM" id="SSF47203">
    <property type="entry name" value="Acyl-CoA dehydrogenase C-terminal domain-like"/>
    <property type="match status" value="1"/>
</dbReference>
<dbReference type="SUPFAM" id="SSF56645">
    <property type="entry name" value="Acyl-CoA dehydrogenase NM domain-like"/>
    <property type="match status" value="1"/>
</dbReference>
<organism>
    <name type="scientific">Bacillus subtilis (strain 168)</name>
    <dbReference type="NCBI Taxonomy" id="224308"/>
    <lineage>
        <taxon>Bacteria</taxon>
        <taxon>Bacillati</taxon>
        <taxon>Bacillota</taxon>
        <taxon>Bacilli</taxon>
        <taxon>Bacillales</taxon>
        <taxon>Bacillaceae</taxon>
        <taxon>Bacillus</taxon>
    </lineage>
</organism>
<accession>C0SPC0</accession>
<accession>O34710</accession>
<accession>Q796F7</accession>
<name>YOAI_BACSU</name>
<feature type="chain" id="PRO_0000387996" description="Probable 4-hydroxyphenylacetate 3-monooxygenase">
    <location>
        <begin position="1"/>
        <end position="483"/>
    </location>
</feature>
<feature type="binding site" evidence="1">
    <location>
        <begin position="104"/>
        <end position="108"/>
    </location>
    <ligand>
        <name>substrate</name>
    </ligand>
</feature>
<feature type="binding site" evidence="1">
    <location>
        <begin position="150"/>
        <end position="152"/>
    </location>
    <ligand>
        <name>FAD</name>
        <dbReference type="ChEBI" id="CHEBI:57692"/>
    </ligand>
</feature>
<feature type="binding site" evidence="1">
    <location>
        <position position="150"/>
    </location>
    <ligand>
        <name>substrate</name>
    </ligand>
</feature>
<feature type="binding site" evidence="1">
    <location>
        <begin position="156"/>
        <end position="159"/>
    </location>
    <ligand>
        <name>FAD</name>
        <dbReference type="ChEBI" id="CHEBI:57692"/>
    </ligand>
</feature>
<feature type="binding site" evidence="1">
    <location>
        <position position="193"/>
    </location>
    <ligand>
        <name>FAD</name>
        <dbReference type="ChEBI" id="CHEBI:57692"/>
    </ligand>
</feature>
<feature type="binding site" evidence="1">
    <location>
        <begin position="206"/>
        <end position="207"/>
    </location>
    <ligand>
        <name>substrate</name>
    </ligand>
</feature>
<feature type="binding site" evidence="1">
    <location>
        <begin position="452"/>
        <end position="455"/>
    </location>
    <ligand>
        <name>FAD</name>
        <dbReference type="ChEBI" id="CHEBI:57692"/>
    </ligand>
</feature>
<proteinExistence type="inferred from homology"/>
<gene>
    <name type="primary">yoaI</name>
    <name type="ordered locus">BSU18620</name>
</gene>
<comment type="function">
    <text evidence="1">Catalyzes the hydroxylation of 4-hydroxyphenylacetic acid (4HPA), leading to the production of 3,4-dihydroxyphenylacetic acid (DHPA).</text>
</comment>
<comment type="catalytic activity">
    <reaction>
        <text>4-hydroxyphenylacetate + FADH2 + O2 = 3,4-dihydroxyphenylacetate + FAD + H2O + H(+)</text>
        <dbReference type="Rhea" id="RHEA:30595"/>
        <dbReference type="ChEBI" id="CHEBI:15377"/>
        <dbReference type="ChEBI" id="CHEBI:15378"/>
        <dbReference type="ChEBI" id="CHEBI:15379"/>
        <dbReference type="ChEBI" id="CHEBI:17612"/>
        <dbReference type="ChEBI" id="CHEBI:48999"/>
        <dbReference type="ChEBI" id="CHEBI:57692"/>
        <dbReference type="ChEBI" id="CHEBI:58307"/>
        <dbReference type="EC" id="1.14.14.9"/>
    </reaction>
</comment>
<comment type="pathway">
    <text>Aromatic compound metabolism; 4-hydroxyphenylacetate degradation; pyruvate and succinate semialdehyde from 4-hydroxyphenylacetate: step 1/7.</text>
</comment>
<comment type="similarity">
    <text evidence="2">Belongs to the FADH(2)-utilizing monooxygenase family.</text>
</comment>
<comment type="sequence caution" evidence="2">
    <conflict type="erroneous initiation">
        <sequence resource="EMBL-CDS" id="AAB84421"/>
    </conflict>
</comment>
<protein>
    <recommendedName>
        <fullName>Probable 4-hydroxyphenylacetate 3-monooxygenase</fullName>
        <ecNumber>1.14.14.9</ecNumber>
    </recommendedName>
    <alternativeName>
        <fullName>4-hydroxyphenylacetate 3-hydroxylase</fullName>
        <shortName>4-HPA 3-hydroxylase</shortName>
    </alternativeName>
</protein>
<keyword id="KW-0058">Aromatic hydrocarbons catabolism</keyword>
<keyword id="KW-0274">FAD</keyword>
<keyword id="KW-0285">Flavoprotein</keyword>
<keyword id="KW-0503">Monooxygenase</keyword>
<keyword id="KW-0560">Oxidoreductase</keyword>
<keyword id="KW-1185">Reference proteome</keyword>
<evidence type="ECO:0000250" key="1"/>
<evidence type="ECO:0000305" key="2"/>
<sequence length="483" mass="55850">MGIINGKEFIDRLNKLENEIWYDGEKIKGNISEHPAFKGIIKTKSSLYELQTKDELIHEMTYCLPGDHNRIGLSYLQPKTKNDLKKRRTMIEHWARHTHGMMGRSPDYMNTVMMSFASSAELLKDKENCFPEHILDMYEQAAKHDLSFTHTFITPQVNRSQSYFGLSEKPISAKVIDRTEKGLMIHGARLLATQGGLTDEILVFSAPKFFFETDEAYAFSIPSNTKGVKFITRESFVLSDSSFNHPLSSRYEEMDSIVVFDHVLVPWNRVFFYDNVEAAKDFMTKSSFHAFTFHQVVIRQMIKIEFLLGVAQLLVDTINVSEYQHIQEKLSEIIVGLETIKALIDKSENDAQLDEFGYMRPCLIPLQVISTIIPKLYPRFTEIIQLIGASGMVTLPTENAFDSEIREDLDQYLQATNTNAEERVKIFRLAWDLTMSSFGTRQTHYERYFFGDPIRISSRLYTSYPKQEQLNMIKTFLHADTEH</sequence>
<reference key="1">
    <citation type="submission" date="1997-10" db="EMBL/GenBank/DDBJ databases">
        <title>Sequence analysis of the Bacillus subtilis chromosome region between the terC and odhAB loci cloned in a yeast artificial chromosome.</title>
        <authorList>
            <person name="Lapidus A."/>
            <person name="Galleron N."/>
            <person name="Sorokin A."/>
            <person name="Ehrlich D."/>
        </authorList>
    </citation>
    <scope>NUCLEOTIDE SEQUENCE [GENOMIC DNA]</scope>
</reference>
<reference key="2">
    <citation type="journal article" date="1997" name="Nature">
        <title>The complete genome sequence of the Gram-positive bacterium Bacillus subtilis.</title>
        <authorList>
            <person name="Kunst F."/>
            <person name="Ogasawara N."/>
            <person name="Moszer I."/>
            <person name="Albertini A.M."/>
            <person name="Alloni G."/>
            <person name="Azevedo V."/>
            <person name="Bertero M.G."/>
            <person name="Bessieres P."/>
            <person name="Bolotin A."/>
            <person name="Borchert S."/>
            <person name="Borriss R."/>
            <person name="Boursier L."/>
            <person name="Brans A."/>
            <person name="Braun M."/>
            <person name="Brignell S.C."/>
            <person name="Bron S."/>
            <person name="Brouillet S."/>
            <person name="Bruschi C.V."/>
            <person name="Caldwell B."/>
            <person name="Capuano V."/>
            <person name="Carter N.M."/>
            <person name="Choi S.-K."/>
            <person name="Codani J.-J."/>
            <person name="Connerton I.F."/>
            <person name="Cummings N.J."/>
            <person name="Daniel R.A."/>
            <person name="Denizot F."/>
            <person name="Devine K.M."/>
            <person name="Duesterhoeft A."/>
            <person name="Ehrlich S.D."/>
            <person name="Emmerson P.T."/>
            <person name="Entian K.-D."/>
            <person name="Errington J."/>
            <person name="Fabret C."/>
            <person name="Ferrari E."/>
            <person name="Foulger D."/>
            <person name="Fritz C."/>
            <person name="Fujita M."/>
            <person name="Fujita Y."/>
            <person name="Fuma S."/>
            <person name="Galizzi A."/>
            <person name="Galleron N."/>
            <person name="Ghim S.-Y."/>
            <person name="Glaser P."/>
            <person name="Goffeau A."/>
            <person name="Golightly E.J."/>
            <person name="Grandi G."/>
            <person name="Guiseppi G."/>
            <person name="Guy B.J."/>
            <person name="Haga K."/>
            <person name="Haiech J."/>
            <person name="Harwood C.R."/>
            <person name="Henaut A."/>
            <person name="Hilbert H."/>
            <person name="Holsappel S."/>
            <person name="Hosono S."/>
            <person name="Hullo M.-F."/>
            <person name="Itaya M."/>
            <person name="Jones L.-M."/>
            <person name="Joris B."/>
            <person name="Karamata D."/>
            <person name="Kasahara Y."/>
            <person name="Klaerr-Blanchard M."/>
            <person name="Klein C."/>
            <person name="Kobayashi Y."/>
            <person name="Koetter P."/>
            <person name="Koningstein G."/>
            <person name="Krogh S."/>
            <person name="Kumano M."/>
            <person name="Kurita K."/>
            <person name="Lapidus A."/>
            <person name="Lardinois S."/>
            <person name="Lauber J."/>
            <person name="Lazarevic V."/>
            <person name="Lee S.-M."/>
            <person name="Levine A."/>
            <person name="Liu H."/>
            <person name="Masuda S."/>
            <person name="Mauel C."/>
            <person name="Medigue C."/>
            <person name="Medina N."/>
            <person name="Mellado R.P."/>
            <person name="Mizuno M."/>
            <person name="Moestl D."/>
            <person name="Nakai S."/>
            <person name="Noback M."/>
            <person name="Noone D."/>
            <person name="O'Reilly M."/>
            <person name="Ogawa K."/>
            <person name="Ogiwara A."/>
            <person name="Oudega B."/>
            <person name="Park S.-H."/>
            <person name="Parro V."/>
            <person name="Pohl T.M."/>
            <person name="Portetelle D."/>
            <person name="Porwollik S."/>
            <person name="Prescott A.M."/>
            <person name="Presecan E."/>
            <person name="Pujic P."/>
            <person name="Purnelle B."/>
            <person name="Rapoport G."/>
            <person name="Rey M."/>
            <person name="Reynolds S."/>
            <person name="Rieger M."/>
            <person name="Rivolta C."/>
            <person name="Rocha E."/>
            <person name="Roche B."/>
            <person name="Rose M."/>
            <person name="Sadaie Y."/>
            <person name="Sato T."/>
            <person name="Scanlan E."/>
            <person name="Schleich S."/>
            <person name="Schroeter R."/>
            <person name="Scoffone F."/>
            <person name="Sekiguchi J."/>
            <person name="Sekowska A."/>
            <person name="Seror S.J."/>
            <person name="Serror P."/>
            <person name="Shin B.-S."/>
            <person name="Soldo B."/>
            <person name="Sorokin A."/>
            <person name="Tacconi E."/>
            <person name="Takagi T."/>
            <person name="Takahashi H."/>
            <person name="Takemaru K."/>
            <person name="Takeuchi M."/>
            <person name="Tamakoshi A."/>
            <person name="Tanaka T."/>
            <person name="Terpstra P."/>
            <person name="Tognoni A."/>
            <person name="Tosato V."/>
            <person name="Uchiyama S."/>
            <person name="Vandenbol M."/>
            <person name="Vannier F."/>
            <person name="Vassarotti A."/>
            <person name="Viari A."/>
            <person name="Wambutt R."/>
            <person name="Wedler E."/>
            <person name="Wedler H."/>
            <person name="Weitzenegger T."/>
            <person name="Winters P."/>
            <person name="Wipat A."/>
            <person name="Yamamoto H."/>
            <person name="Yamane K."/>
            <person name="Yasumoto K."/>
            <person name="Yata K."/>
            <person name="Yoshida K."/>
            <person name="Yoshikawa H.-F."/>
            <person name="Zumstein E."/>
            <person name="Yoshikawa H."/>
            <person name="Danchin A."/>
        </authorList>
    </citation>
    <scope>NUCLEOTIDE SEQUENCE [LARGE SCALE GENOMIC DNA]</scope>
    <source>
        <strain>168</strain>
    </source>
</reference>
<reference key="3">
    <citation type="journal article" date="2009" name="Microbiology">
        <title>From a consortium sequence to a unified sequence: the Bacillus subtilis 168 reference genome a decade later.</title>
        <authorList>
            <person name="Barbe V."/>
            <person name="Cruveiller S."/>
            <person name="Kunst F."/>
            <person name="Lenoble P."/>
            <person name="Meurice G."/>
            <person name="Sekowska A."/>
            <person name="Vallenet D."/>
            <person name="Wang T."/>
            <person name="Moszer I."/>
            <person name="Medigue C."/>
            <person name="Danchin A."/>
        </authorList>
    </citation>
    <scope>SEQUENCE REVISION TO N-TERMINUS</scope>
</reference>